<name>YCF37_PORPU</name>
<protein>
    <recommendedName>
        <fullName>Uncharacterized protein ycf37</fullName>
    </recommendedName>
</protein>
<reference key="1">
    <citation type="journal article" date="1995" name="Plant Mol. Biol. Rep.">
        <title>Complete nucleotide sequence of the Porphyra purpurea chloroplast genome.</title>
        <authorList>
            <person name="Reith M.E."/>
            <person name="Munholland J."/>
        </authorList>
    </citation>
    <scope>NUCLEOTIDE SEQUENCE [LARGE SCALE GENOMIC DNA]</scope>
    <source>
        <strain>Avonport</strain>
    </source>
</reference>
<proteinExistence type="inferred from homology"/>
<feature type="chain" id="PRO_0000217357" description="Uncharacterized protein ycf37">
    <location>
        <begin position="1"/>
        <end position="173"/>
    </location>
</feature>
<feature type="repeat" description="TPR 1">
    <location>
        <begin position="52"/>
        <end position="89"/>
    </location>
</feature>
<feature type="repeat" description="TPR 2">
    <location>
        <begin position="95"/>
        <end position="128"/>
    </location>
</feature>
<feature type="repeat" description="TPR 3">
    <location>
        <begin position="129"/>
        <end position="162"/>
    </location>
</feature>
<keyword id="KW-0150">Chloroplast</keyword>
<keyword id="KW-0934">Plastid</keyword>
<keyword id="KW-0677">Repeat</keyword>
<keyword id="KW-0802">TPR repeat</keyword>
<accession>P51191</accession>
<dbReference type="EMBL" id="U38804">
    <property type="protein sequence ID" value="AAC08077.1"/>
    <property type="molecule type" value="Genomic_DNA"/>
</dbReference>
<dbReference type="PIR" id="S73112">
    <property type="entry name" value="S73112"/>
</dbReference>
<dbReference type="RefSeq" id="NP_053801.1">
    <property type="nucleotide sequence ID" value="NC_000925.1"/>
</dbReference>
<dbReference type="SMR" id="P51191"/>
<dbReference type="GeneID" id="809814"/>
<dbReference type="GO" id="GO:0009507">
    <property type="term" value="C:chloroplast"/>
    <property type="evidence" value="ECO:0007669"/>
    <property type="project" value="UniProtKB-SubCell"/>
</dbReference>
<dbReference type="Gene3D" id="1.25.40.10">
    <property type="entry name" value="Tetratricopeptide repeat domain"/>
    <property type="match status" value="1"/>
</dbReference>
<dbReference type="InterPro" id="IPR011990">
    <property type="entry name" value="TPR-like_helical_dom_sf"/>
</dbReference>
<dbReference type="InterPro" id="IPR019734">
    <property type="entry name" value="TPR_rpt"/>
</dbReference>
<dbReference type="Pfam" id="PF13181">
    <property type="entry name" value="TPR_8"/>
    <property type="match status" value="2"/>
</dbReference>
<dbReference type="SMART" id="SM00028">
    <property type="entry name" value="TPR"/>
    <property type="match status" value="2"/>
</dbReference>
<dbReference type="SUPFAM" id="SSF48452">
    <property type="entry name" value="TPR-like"/>
    <property type="match status" value="1"/>
</dbReference>
<dbReference type="PROSITE" id="PS50005">
    <property type="entry name" value="TPR"/>
    <property type="match status" value="2"/>
</dbReference>
<dbReference type="PROSITE" id="PS50293">
    <property type="entry name" value="TPR_REGION"/>
    <property type="match status" value="1"/>
</dbReference>
<organism>
    <name type="scientific">Porphyra purpurea</name>
    <name type="common">Red seaweed</name>
    <name type="synonym">Ulva purpurea</name>
    <dbReference type="NCBI Taxonomy" id="2787"/>
    <lineage>
        <taxon>Eukaryota</taxon>
        <taxon>Rhodophyta</taxon>
        <taxon>Bangiophyceae</taxon>
        <taxon>Bangiales</taxon>
        <taxon>Bangiaceae</taxon>
        <taxon>Porphyra</taxon>
    </lineage>
</organism>
<sequence>MLVTLPIFYLSILTLFLLTFSWLISQQLKTIFLLESQFQYFLDKSKNDELGIEDGFAFSKVCIAKKYFTRAIIESHLVLKKNSLLESPENAAIIAKLYNMLGFIYYKADQKKLAKNFYERAIEVDGNYIVALNNLAKIYEDTKNILKAEALYDKVLNIAKSNKIANTHKKFIK</sequence>
<comment type="subcellular location">
    <subcellularLocation>
        <location>Plastid</location>
        <location>Chloroplast</location>
    </subcellularLocation>
</comment>
<comment type="similarity">
    <text evidence="1">Belongs to the ycf37 family.</text>
</comment>
<gene>
    <name type="primary">ycf37</name>
</gene>
<geneLocation type="chloroplast"/>
<evidence type="ECO:0000305" key="1"/>